<proteinExistence type="evidence at transcript level"/>
<name>G3P_LENED</name>
<gene>
    <name type="primary">gpd</name>
</gene>
<sequence>MAVKVGINGFGRIGRIVLRNALLNPEVNVVAVNDPFIALEYMVYMFKYDSVHGRFKGTVETKGGKLIVDGKEISVFGEKDAGAIPWSSVGAEYIVESTGVFTTIEKASAHLKGGAKKVIISAPSADAPMYVCGVNLDSYDSQHAVISNASCTTNCLAPLAKVIHDKFGIVEALMTTVHATTATQKTVDGPSNKDWRGGRSVNGNIIPSSTGAAKAVGKVIPSLNGKLTGLAFRVPTLDVSVVDLVCRTEKSATYDEIKAAVKEASKGPLKGILGYTEDHVVSTDFIGDNHSSIFDATAGIQLNKNFVKLIAWYDNEWGYSGRVVDLLVFAAKKDGAL</sequence>
<evidence type="ECO:0000250" key="1"/>
<evidence type="ECO:0000255" key="2">
    <source>
        <dbReference type="PROSITE-ProRule" id="PRU10009"/>
    </source>
</evidence>
<evidence type="ECO:0000269" key="3">
    <source>
    </source>
</evidence>
<evidence type="ECO:0000305" key="4"/>
<accession>Q9UR38</accession>
<protein>
    <recommendedName>
        <fullName>Glyceraldehyde-3-phosphate dehydrogenase</fullName>
        <shortName>GAPDH</shortName>
        <ecNumber>1.2.1.12</ecNumber>
    </recommendedName>
</protein>
<keyword id="KW-0963">Cytoplasm</keyword>
<keyword id="KW-0324">Glycolysis</keyword>
<keyword id="KW-0520">NAD</keyword>
<keyword id="KW-0560">Oxidoreductase</keyword>
<comment type="catalytic activity">
    <reaction evidence="2">
        <text>D-glyceraldehyde 3-phosphate + phosphate + NAD(+) = (2R)-3-phospho-glyceroyl phosphate + NADH + H(+)</text>
        <dbReference type="Rhea" id="RHEA:10300"/>
        <dbReference type="ChEBI" id="CHEBI:15378"/>
        <dbReference type="ChEBI" id="CHEBI:43474"/>
        <dbReference type="ChEBI" id="CHEBI:57540"/>
        <dbReference type="ChEBI" id="CHEBI:57604"/>
        <dbReference type="ChEBI" id="CHEBI:57945"/>
        <dbReference type="ChEBI" id="CHEBI:59776"/>
        <dbReference type="EC" id="1.2.1.12"/>
    </reaction>
</comment>
<comment type="pathway">
    <text>Carbohydrate degradation; glycolysis; pyruvate from D-glyceraldehyde 3-phosphate: step 1/5.</text>
</comment>
<comment type="subunit">
    <text evidence="1">Homotetramer.</text>
</comment>
<comment type="subcellular location">
    <subcellularLocation>
        <location>Cytoplasm</location>
    </subcellularLocation>
</comment>
<comment type="tissue specificity">
    <text evidence="3">Expressed in all tissues examined.</text>
</comment>
<comment type="similarity">
    <text evidence="4">Belongs to the glyceraldehyde-3-phosphate dehydrogenase family.</text>
</comment>
<reference key="1">
    <citation type="journal article" date="1999" name="Biosci. Biotechnol. Biochem.">
        <title>Isolation and characterization of the glyceraldehyde-3-phosphate dehydrogenase gene of Lentinus edodes.</title>
        <authorList>
            <person name="Hirano T."/>
            <person name="Sato T."/>
            <person name="Okawa K."/>
            <person name="Kanda K."/>
            <person name="Yaegashi K."/>
            <person name="Enei H."/>
        </authorList>
    </citation>
    <scope>NUCLEOTIDE SEQUENCE [GENOMIC DNA / MRNA]</scope>
    <scope>TISSUE SPECIFICITY</scope>
    <source>
        <strain>57</strain>
    </source>
</reference>
<dbReference type="EC" id="1.2.1.12"/>
<dbReference type="EMBL" id="AB013136">
    <property type="protein sequence ID" value="BAA83550.1"/>
    <property type="molecule type" value="Genomic_DNA"/>
</dbReference>
<dbReference type="EMBL" id="AB012862">
    <property type="protein sequence ID" value="BAA83549.1"/>
    <property type="molecule type" value="mRNA"/>
</dbReference>
<dbReference type="SMR" id="Q9UR38"/>
<dbReference type="UniPathway" id="UPA00109">
    <property type="reaction ID" value="UER00184"/>
</dbReference>
<dbReference type="GO" id="GO:0005829">
    <property type="term" value="C:cytosol"/>
    <property type="evidence" value="ECO:0007669"/>
    <property type="project" value="TreeGrafter"/>
</dbReference>
<dbReference type="GO" id="GO:0004365">
    <property type="term" value="F:glyceraldehyde-3-phosphate dehydrogenase (NAD+) (phosphorylating) activity"/>
    <property type="evidence" value="ECO:0007669"/>
    <property type="project" value="UniProtKB-EC"/>
</dbReference>
<dbReference type="GO" id="GO:0051287">
    <property type="term" value="F:NAD binding"/>
    <property type="evidence" value="ECO:0007669"/>
    <property type="project" value="InterPro"/>
</dbReference>
<dbReference type="GO" id="GO:0050661">
    <property type="term" value="F:NADP binding"/>
    <property type="evidence" value="ECO:0007669"/>
    <property type="project" value="InterPro"/>
</dbReference>
<dbReference type="GO" id="GO:0006006">
    <property type="term" value="P:glucose metabolic process"/>
    <property type="evidence" value="ECO:0007669"/>
    <property type="project" value="InterPro"/>
</dbReference>
<dbReference type="GO" id="GO:0006096">
    <property type="term" value="P:glycolytic process"/>
    <property type="evidence" value="ECO:0007669"/>
    <property type="project" value="UniProtKB-UniPathway"/>
</dbReference>
<dbReference type="CDD" id="cd18126">
    <property type="entry name" value="GAPDH_I_C"/>
    <property type="match status" value="1"/>
</dbReference>
<dbReference type="CDD" id="cd05214">
    <property type="entry name" value="GAPDH_I_N"/>
    <property type="match status" value="1"/>
</dbReference>
<dbReference type="FunFam" id="3.30.360.10:FF:000001">
    <property type="entry name" value="Glyceraldehyde-3-phosphate dehydrogenase"/>
    <property type="match status" value="1"/>
</dbReference>
<dbReference type="FunFam" id="3.40.50.720:FF:000266">
    <property type="entry name" value="Glyceraldehyde-3-phosphate dehydrogenase"/>
    <property type="match status" value="1"/>
</dbReference>
<dbReference type="Gene3D" id="3.30.360.10">
    <property type="entry name" value="Dihydrodipicolinate Reductase, domain 2"/>
    <property type="match status" value="1"/>
</dbReference>
<dbReference type="Gene3D" id="3.40.50.720">
    <property type="entry name" value="NAD(P)-binding Rossmann-like Domain"/>
    <property type="match status" value="1"/>
</dbReference>
<dbReference type="InterPro" id="IPR020831">
    <property type="entry name" value="GlycerAld/Erythrose_P_DH"/>
</dbReference>
<dbReference type="InterPro" id="IPR020830">
    <property type="entry name" value="GlycerAld_3-P_DH_AS"/>
</dbReference>
<dbReference type="InterPro" id="IPR020829">
    <property type="entry name" value="GlycerAld_3-P_DH_cat"/>
</dbReference>
<dbReference type="InterPro" id="IPR020828">
    <property type="entry name" value="GlycerAld_3-P_DH_NAD(P)-bd"/>
</dbReference>
<dbReference type="InterPro" id="IPR006424">
    <property type="entry name" value="Glyceraldehyde-3-P_DH_1"/>
</dbReference>
<dbReference type="InterPro" id="IPR036291">
    <property type="entry name" value="NAD(P)-bd_dom_sf"/>
</dbReference>
<dbReference type="NCBIfam" id="TIGR01534">
    <property type="entry name" value="GAPDH-I"/>
    <property type="match status" value="1"/>
</dbReference>
<dbReference type="PANTHER" id="PTHR10836">
    <property type="entry name" value="GLYCERALDEHYDE 3-PHOSPHATE DEHYDROGENASE"/>
    <property type="match status" value="1"/>
</dbReference>
<dbReference type="PANTHER" id="PTHR10836:SF76">
    <property type="entry name" value="GLYCERALDEHYDE-3-PHOSPHATE DEHYDROGENASE-RELATED"/>
    <property type="match status" value="1"/>
</dbReference>
<dbReference type="Pfam" id="PF02800">
    <property type="entry name" value="Gp_dh_C"/>
    <property type="match status" value="1"/>
</dbReference>
<dbReference type="Pfam" id="PF00044">
    <property type="entry name" value="Gp_dh_N"/>
    <property type="match status" value="1"/>
</dbReference>
<dbReference type="PIRSF" id="PIRSF000149">
    <property type="entry name" value="GAP_DH"/>
    <property type="match status" value="1"/>
</dbReference>
<dbReference type="PRINTS" id="PR00078">
    <property type="entry name" value="G3PDHDRGNASE"/>
</dbReference>
<dbReference type="SMART" id="SM00846">
    <property type="entry name" value="Gp_dh_N"/>
    <property type="match status" value="1"/>
</dbReference>
<dbReference type="SUPFAM" id="SSF55347">
    <property type="entry name" value="Glyceraldehyde-3-phosphate dehydrogenase-like, C-terminal domain"/>
    <property type="match status" value="1"/>
</dbReference>
<dbReference type="SUPFAM" id="SSF51735">
    <property type="entry name" value="NAD(P)-binding Rossmann-fold domains"/>
    <property type="match status" value="1"/>
</dbReference>
<dbReference type="PROSITE" id="PS00071">
    <property type="entry name" value="GAPDH"/>
    <property type="match status" value="1"/>
</dbReference>
<feature type="chain" id="PRO_0000145560" description="Glyceraldehyde-3-phosphate dehydrogenase">
    <location>
        <begin position="1"/>
        <end position="337"/>
    </location>
</feature>
<feature type="active site" description="Nucleophile" evidence="2">
    <location>
        <position position="151"/>
    </location>
</feature>
<feature type="binding site" evidence="1">
    <location>
        <begin position="12"/>
        <end position="13"/>
    </location>
    <ligand>
        <name>NAD(+)</name>
        <dbReference type="ChEBI" id="CHEBI:57540"/>
    </ligand>
</feature>
<feature type="binding site" evidence="1">
    <location>
        <position position="34"/>
    </location>
    <ligand>
        <name>NAD(+)</name>
        <dbReference type="ChEBI" id="CHEBI:57540"/>
    </ligand>
</feature>
<feature type="binding site" evidence="1">
    <location>
        <position position="79"/>
    </location>
    <ligand>
        <name>NAD(+)</name>
        <dbReference type="ChEBI" id="CHEBI:57540"/>
    </ligand>
</feature>
<feature type="binding site" evidence="1">
    <location>
        <begin position="150"/>
        <end position="152"/>
    </location>
    <ligand>
        <name>D-glyceraldehyde 3-phosphate</name>
        <dbReference type="ChEBI" id="CHEBI:59776"/>
    </ligand>
</feature>
<feature type="binding site" evidence="1">
    <location>
        <position position="181"/>
    </location>
    <ligand>
        <name>D-glyceraldehyde 3-phosphate</name>
        <dbReference type="ChEBI" id="CHEBI:59776"/>
    </ligand>
</feature>
<feature type="binding site" evidence="1">
    <location>
        <begin position="210"/>
        <end position="211"/>
    </location>
    <ligand>
        <name>D-glyceraldehyde 3-phosphate</name>
        <dbReference type="ChEBI" id="CHEBI:59776"/>
    </ligand>
</feature>
<feature type="binding site" evidence="1">
    <location>
        <position position="233"/>
    </location>
    <ligand>
        <name>D-glyceraldehyde 3-phosphate</name>
        <dbReference type="ChEBI" id="CHEBI:59776"/>
    </ligand>
</feature>
<feature type="binding site" evidence="1">
    <location>
        <position position="315"/>
    </location>
    <ligand>
        <name>NAD(+)</name>
        <dbReference type="ChEBI" id="CHEBI:57540"/>
    </ligand>
</feature>
<feature type="site" description="Activates thiol group during catalysis" evidence="1">
    <location>
        <position position="178"/>
    </location>
</feature>
<organism>
    <name type="scientific">Lentinula edodes</name>
    <name type="common">Shiitake mushroom</name>
    <name type="synonym">Lentinus edodes</name>
    <dbReference type="NCBI Taxonomy" id="5353"/>
    <lineage>
        <taxon>Eukaryota</taxon>
        <taxon>Fungi</taxon>
        <taxon>Dikarya</taxon>
        <taxon>Basidiomycota</taxon>
        <taxon>Agaricomycotina</taxon>
        <taxon>Agaricomycetes</taxon>
        <taxon>Agaricomycetidae</taxon>
        <taxon>Agaricales</taxon>
        <taxon>Marasmiineae</taxon>
        <taxon>Omphalotaceae</taxon>
        <taxon>Lentinula</taxon>
    </lineage>
</organism>